<keyword id="KW-0004">4Fe-4S</keyword>
<keyword id="KW-0249">Electron transport</keyword>
<keyword id="KW-0408">Iron</keyword>
<keyword id="KW-0411">Iron-sulfur</keyword>
<keyword id="KW-0479">Metal-binding</keyword>
<keyword id="KW-1185">Reference proteome</keyword>
<keyword id="KW-0677">Repeat</keyword>
<keyword id="KW-0813">Transport</keyword>
<proteinExistence type="inferred from homology"/>
<reference key="1">
    <citation type="journal article" date="2009" name="J. Bacteriol.">
        <title>Complete genome sequence of Macrococcus caseolyticus strain JCSCS5402, reflecting the ancestral genome of the human-pathogenic staphylococci.</title>
        <authorList>
            <person name="Baba T."/>
            <person name="Kuwahara-Arai K."/>
            <person name="Uchiyama I."/>
            <person name="Takeuchi F."/>
            <person name="Ito T."/>
            <person name="Hiramatsu K."/>
        </authorList>
    </citation>
    <scope>NUCLEOTIDE SEQUENCE [LARGE SCALE GENOMIC DNA]</scope>
    <source>
        <strain>JCSC5402</strain>
    </source>
</reference>
<accession>B9E9G9</accession>
<organism>
    <name type="scientific">Macrococcus caseolyticus (strain JCSC5402)</name>
    <name type="common">Macrococcoides caseolyticum</name>
    <dbReference type="NCBI Taxonomy" id="458233"/>
    <lineage>
        <taxon>Bacteria</taxon>
        <taxon>Bacillati</taxon>
        <taxon>Bacillota</taxon>
        <taxon>Bacilli</taxon>
        <taxon>Bacillales</taxon>
        <taxon>Staphylococcaceae</taxon>
        <taxon>Macrococcoides</taxon>
    </lineage>
</organism>
<name>LUTB_MACCJ</name>
<gene>
    <name evidence="1" type="primary">lutB</name>
    <name type="ordered locus">MCCL_0173</name>
</gene>
<comment type="function">
    <text evidence="1">Is involved in L-lactate degradation and allows cells to grow with lactate as the sole carbon source. Has probably a role as an electron transporter during oxidation of L-lactate.</text>
</comment>
<comment type="similarity">
    <text evidence="1">Belongs to the LutB/YkgF family.</text>
</comment>
<protein>
    <recommendedName>
        <fullName evidence="1">Lactate utilization protein B</fullName>
    </recommendedName>
</protein>
<sequence length="477" mass="53276">MSMRIGNETFKQAVKTELKDDFMRGAVSSAQDRLRERKLKTQEDLGNWEEWRDHSEEIRQHTLANLDYYLNMLSENVAAKGGHVFFAETAEEANQYVQKVLRDKNAKKVAKSKSMVTEEIGLNEAMEAVGCEVIETDLGEYILQVDDHNPPSHIVVPALHLNKEQIEKVFKEKLGYDKSSQPEELALFARQKLREEFLSADVGVTGCNFGVAESGSFSLVTNEGNARMVTTLPKTQITVMGMERLVPTHEELEVLVSMLTRSAVGQKLTSYVTTLTGPRAEDEIDGPEEFHLIIVDNGRSKILGTQFQSILQCIRCAACVNVCPVYRQTGGHSYGSIYPGPIGAVLSPLLGGYDTYKELPYASTLCGACTEACPVKIPLHDLLLEHRRVIVEEEHMSPVAERLVMKGFAQGASHSTLFKYGTKAAPALMSPFENKDKGMITKGPKPLQAWTNSRDFPMPDDENFRDWMQNRLKRGAK</sequence>
<evidence type="ECO:0000255" key="1">
    <source>
        <dbReference type="HAMAP-Rule" id="MF_02103"/>
    </source>
</evidence>
<evidence type="ECO:0000256" key="2">
    <source>
        <dbReference type="SAM" id="MobiDB-lite"/>
    </source>
</evidence>
<feature type="chain" id="PRO_0000383985" description="Lactate utilization protein B">
    <location>
        <begin position="1"/>
        <end position="477"/>
    </location>
</feature>
<feature type="domain" description="4Fe-4S ferredoxin-type 1" evidence="1">
    <location>
        <begin position="304"/>
        <end position="334"/>
    </location>
</feature>
<feature type="domain" description="4Fe-4S ferredoxin-type 2" evidence="1">
    <location>
        <begin position="353"/>
        <end position="382"/>
    </location>
</feature>
<feature type="region of interest" description="Disordered" evidence="2">
    <location>
        <begin position="443"/>
        <end position="463"/>
    </location>
</feature>
<feature type="binding site" evidence="1">
    <location>
        <position position="313"/>
    </location>
    <ligand>
        <name>[4Fe-4S] cluster</name>
        <dbReference type="ChEBI" id="CHEBI:49883"/>
        <label>1</label>
    </ligand>
</feature>
<feature type="binding site" evidence="1">
    <location>
        <position position="316"/>
    </location>
    <ligand>
        <name>[4Fe-4S] cluster</name>
        <dbReference type="ChEBI" id="CHEBI:49883"/>
        <label>1</label>
    </ligand>
</feature>
<feature type="binding site" evidence="1">
    <location>
        <position position="319"/>
    </location>
    <ligand>
        <name>[4Fe-4S] cluster</name>
        <dbReference type="ChEBI" id="CHEBI:49883"/>
        <label>1</label>
    </ligand>
</feature>
<feature type="binding site" evidence="1">
    <location>
        <position position="323"/>
    </location>
    <ligand>
        <name>[4Fe-4S] cluster</name>
        <dbReference type="ChEBI" id="CHEBI:49883"/>
        <label>2</label>
    </ligand>
</feature>
<feature type="binding site" evidence="1">
    <location>
        <position position="366"/>
    </location>
    <ligand>
        <name>[4Fe-4S] cluster</name>
        <dbReference type="ChEBI" id="CHEBI:49883"/>
        <label>2</label>
    </ligand>
</feature>
<feature type="binding site" evidence="1">
    <location>
        <position position="369"/>
    </location>
    <ligand>
        <name>[4Fe-4S] cluster</name>
        <dbReference type="ChEBI" id="CHEBI:49883"/>
        <label>2</label>
    </ligand>
</feature>
<feature type="binding site" evidence="1">
    <location>
        <position position="373"/>
    </location>
    <ligand>
        <name>[4Fe-4S] cluster</name>
        <dbReference type="ChEBI" id="CHEBI:49883"/>
        <label>1</label>
    </ligand>
</feature>
<dbReference type="EMBL" id="AP009484">
    <property type="protein sequence ID" value="BAH16880.1"/>
    <property type="molecule type" value="Genomic_DNA"/>
</dbReference>
<dbReference type="RefSeq" id="WP_012656084.1">
    <property type="nucleotide sequence ID" value="NC_011999.1"/>
</dbReference>
<dbReference type="STRING" id="458233.MCCL_0173"/>
<dbReference type="KEGG" id="mcl:MCCL_0173"/>
<dbReference type="eggNOG" id="COG1139">
    <property type="taxonomic scope" value="Bacteria"/>
</dbReference>
<dbReference type="HOGENOM" id="CLU_027059_2_0_9"/>
<dbReference type="OrthoDB" id="9782337at2"/>
<dbReference type="Proteomes" id="UP000001383">
    <property type="component" value="Chromosome"/>
</dbReference>
<dbReference type="GO" id="GO:0051539">
    <property type="term" value="F:4 iron, 4 sulfur cluster binding"/>
    <property type="evidence" value="ECO:0007669"/>
    <property type="project" value="UniProtKB-KW"/>
</dbReference>
<dbReference type="GO" id="GO:0046872">
    <property type="term" value="F:metal ion binding"/>
    <property type="evidence" value="ECO:0007669"/>
    <property type="project" value="UniProtKB-KW"/>
</dbReference>
<dbReference type="GO" id="GO:0006089">
    <property type="term" value="P:lactate metabolic process"/>
    <property type="evidence" value="ECO:0007669"/>
    <property type="project" value="UniProtKB-UniRule"/>
</dbReference>
<dbReference type="Gene3D" id="1.10.1060.10">
    <property type="entry name" value="Alpha-helical ferredoxin"/>
    <property type="match status" value="1"/>
</dbReference>
<dbReference type="Gene3D" id="3.40.50.10420">
    <property type="entry name" value="NagB/RpiA/CoA transferase-like"/>
    <property type="match status" value="1"/>
</dbReference>
<dbReference type="HAMAP" id="MF_02103">
    <property type="entry name" value="LutB"/>
    <property type="match status" value="1"/>
</dbReference>
<dbReference type="InterPro" id="IPR017896">
    <property type="entry name" value="4Fe4S_Fe-S-bd"/>
</dbReference>
<dbReference type="InterPro" id="IPR017900">
    <property type="entry name" value="4Fe4S_Fe_S_CS"/>
</dbReference>
<dbReference type="InterPro" id="IPR024185">
    <property type="entry name" value="FTHF_cligase-like_sf"/>
</dbReference>
<dbReference type="InterPro" id="IPR009051">
    <property type="entry name" value="Helical_ferredxn"/>
</dbReference>
<dbReference type="InterPro" id="IPR003741">
    <property type="entry name" value="LUD_dom"/>
</dbReference>
<dbReference type="InterPro" id="IPR022825">
    <property type="entry name" value="LutB"/>
</dbReference>
<dbReference type="InterPro" id="IPR004452">
    <property type="entry name" value="LutB/LldF"/>
</dbReference>
<dbReference type="InterPro" id="IPR024569">
    <property type="entry name" value="LutB_C"/>
</dbReference>
<dbReference type="InterPro" id="IPR037171">
    <property type="entry name" value="NagB/RpiA_transferase-like"/>
</dbReference>
<dbReference type="NCBIfam" id="TIGR00273">
    <property type="entry name" value="LutB/LldF family L-lactate oxidation iron-sulfur protein"/>
    <property type="match status" value="1"/>
</dbReference>
<dbReference type="PANTHER" id="PTHR47153">
    <property type="entry name" value="LACTATE UTILIZATION PROTEIN B"/>
    <property type="match status" value="1"/>
</dbReference>
<dbReference type="PANTHER" id="PTHR47153:SF2">
    <property type="entry name" value="LACTATE UTILIZATION PROTEIN B"/>
    <property type="match status" value="1"/>
</dbReference>
<dbReference type="Pfam" id="PF13183">
    <property type="entry name" value="Fer4_8"/>
    <property type="match status" value="1"/>
</dbReference>
<dbReference type="Pfam" id="PF02589">
    <property type="entry name" value="LUD_dom"/>
    <property type="match status" value="1"/>
</dbReference>
<dbReference type="Pfam" id="PF11870">
    <property type="entry name" value="LutB_C"/>
    <property type="match status" value="1"/>
</dbReference>
<dbReference type="SUPFAM" id="SSF46548">
    <property type="entry name" value="alpha-helical ferredoxin"/>
    <property type="match status" value="1"/>
</dbReference>
<dbReference type="SUPFAM" id="SSF100950">
    <property type="entry name" value="NagB/RpiA/CoA transferase-like"/>
    <property type="match status" value="1"/>
</dbReference>
<dbReference type="PROSITE" id="PS00198">
    <property type="entry name" value="4FE4S_FER_1"/>
    <property type="match status" value="1"/>
</dbReference>